<organism>
    <name type="scientific">Shewanella woodyi (strain ATCC 51908 / MS32)</name>
    <dbReference type="NCBI Taxonomy" id="392500"/>
    <lineage>
        <taxon>Bacteria</taxon>
        <taxon>Pseudomonadati</taxon>
        <taxon>Pseudomonadota</taxon>
        <taxon>Gammaproteobacteria</taxon>
        <taxon>Alteromonadales</taxon>
        <taxon>Shewanellaceae</taxon>
        <taxon>Shewanella</taxon>
    </lineage>
</organism>
<sequence length="736" mass="81474">MFKKTILSFVISAVMVTAASAVENEQPKSNQFWWPNQLDLTPLRNHSDESNPQNSNFDYAEAFEKLDLEAVKKDIDKVLTNSQDWWPADYGHYGPFFIRMAWHAAGTYRTHDGRGGAGGGQQRFDPLNSWPDNVNLDKARRLLWPIKQKYGQSISWADLIALTGNVALESMGFKTYGYAGGREDDWEPDLVYWGPESKFLTDERRDKKGKLKGPLAAVEMGLIYVNPVGPHGNPDPLLAANDIRMSFGRMAMNDEEIVALIAGGHTFGKAHGAKKPTECVGPEPAAAAVEEQGFGWKNRCGTGSGADTTSSGLEGAWTITPTQWTTNYLDNLFTFNWVKTKSPAGAIQWIPDTDTAANLVPDAHDPTKRHAPIMFTTDIAIKEDPKFRAIAESFRKSPDKYELAFAKAWFKLNHRDLGPRSRYLGNEVPKEVLVWQDPIPELNHPVVNDADIAKLKSEILKSGLSVQDLVLTAWASASSYRGTDMRGGANGARINLSPQNEWQVNNPKQLAKVLNKLEKIKDKFNKKSKKAKISLADLIVLGGAAAIEKSVKEAGFNNKVPFTPGRMDASQAMTDVASFGVLESTADGFRNYYSDESNLSPAQMLIDKADLLTLTVPEMTALVGGMRALSANADGSNHGVFTDQPGVLSNDFFVNLLDMSVKWSKKPKSEALYEGYDRKTGKLKWTATPVDLVFGSNTELRAISEFYASKNAEEQFITDFIAAWHKVMVNDRFDIK</sequence>
<proteinExistence type="inferred from homology"/>
<keyword id="KW-0349">Heme</keyword>
<keyword id="KW-0376">Hydrogen peroxide</keyword>
<keyword id="KW-0408">Iron</keyword>
<keyword id="KW-0479">Metal-binding</keyword>
<keyword id="KW-0560">Oxidoreductase</keyword>
<keyword id="KW-0575">Peroxidase</keyword>
<keyword id="KW-1185">Reference proteome</keyword>
<keyword id="KW-0732">Signal</keyword>
<gene>
    <name evidence="1" type="primary">katG</name>
    <name type="ordered locus">Swoo_3905</name>
</gene>
<name>KATG_SHEWM</name>
<evidence type="ECO:0000255" key="1">
    <source>
        <dbReference type="HAMAP-Rule" id="MF_01961"/>
    </source>
</evidence>
<reference key="1">
    <citation type="submission" date="2008-02" db="EMBL/GenBank/DDBJ databases">
        <title>Complete sequence of Shewanella woodyi ATCC 51908.</title>
        <authorList>
            <consortium name="US DOE Joint Genome Institute"/>
            <person name="Copeland A."/>
            <person name="Lucas S."/>
            <person name="Lapidus A."/>
            <person name="Glavina del Rio T."/>
            <person name="Dalin E."/>
            <person name="Tice H."/>
            <person name="Bruce D."/>
            <person name="Goodwin L."/>
            <person name="Pitluck S."/>
            <person name="Sims D."/>
            <person name="Brettin T."/>
            <person name="Detter J.C."/>
            <person name="Han C."/>
            <person name="Kuske C.R."/>
            <person name="Schmutz J."/>
            <person name="Larimer F."/>
            <person name="Land M."/>
            <person name="Hauser L."/>
            <person name="Kyrpides N."/>
            <person name="Lykidis A."/>
            <person name="Zhao J.-S."/>
            <person name="Richardson P."/>
        </authorList>
    </citation>
    <scope>NUCLEOTIDE SEQUENCE [LARGE SCALE GENOMIC DNA]</scope>
    <source>
        <strain>ATCC 51908 / MS32</strain>
    </source>
</reference>
<accession>B1KFI8</accession>
<protein>
    <recommendedName>
        <fullName evidence="1">Catalase-peroxidase</fullName>
        <shortName evidence="1">CP</shortName>
        <ecNumber evidence="1">1.11.1.21</ecNumber>
    </recommendedName>
    <alternativeName>
        <fullName evidence="1">Peroxidase/catalase</fullName>
    </alternativeName>
</protein>
<feature type="signal peptide" evidence="1">
    <location>
        <begin position="1"/>
        <end position="21"/>
    </location>
</feature>
<feature type="chain" id="PRO_5000316507" description="Catalase-peroxidase">
    <location>
        <begin position="22"/>
        <end position="736"/>
    </location>
</feature>
<feature type="active site" description="Proton acceptor" evidence="1">
    <location>
        <position position="103"/>
    </location>
</feature>
<feature type="binding site" description="axial binding residue" evidence="1">
    <location>
        <position position="265"/>
    </location>
    <ligand>
        <name>heme b</name>
        <dbReference type="ChEBI" id="CHEBI:60344"/>
    </ligand>
    <ligandPart>
        <name>Fe</name>
        <dbReference type="ChEBI" id="CHEBI:18248"/>
    </ligandPart>
</feature>
<feature type="site" description="Transition state stabilizer" evidence="1">
    <location>
        <position position="99"/>
    </location>
</feature>
<feature type="cross-link" description="Tryptophyl-tyrosyl-methioninium (Trp-Tyr) (with M-250)" evidence="1">
    <location>
        <begin position="102"/>
        <end position="224"/>
    </location>
</feature>
<feature type="cross-link" description="Tryptophyl-tyrosyl-methioninium (Tyr-Met) (with W-102)" evidence="1">
    <location>
        <begin position="224"/>
        <end position="250"/>
    </location>
</feature>
<comment type="function">
    <text evidence="1">Bifunctional enzyme with both catalase and broad-spectrum peroxidase activity.</text>
</comment>
<comment type="catalytic activity">
    <reaction evidence="1">
        <text>H2O2 + AH2 = A + 2 H2O</text>
        <dbReference type="Rhea" id="RHEA:30275"/>
        <dbReference type="ChEBI" id="CHEBI:13193"/>
        <dbReference type="ChEBI" id="CHEBI:15377"/>
        <dbReference type="ChEBI" id="CHEBI:16240"/>
        <dbReference type="ChEBI" id="CHEBI:17499"/>
        <dbReference type="EC" id="1.11.1.21"/>
    </reaction>
</comment>
<comment type="catalytic activity">
    <reaction evidence="1">
        <text>2 H2O2 = O2 + 2 H2O</text>
        <dbReference type="Rhea" id="RHEA:20309"/>
        <dbReference type="ChEBI" id="CHEBI:15377"/>
        <dbReference type="ChEBI" id="CHEBI:15379"/>
        <dbReference type="ChEBI" id="CHEBI:16240"/>
        <dbReference type="EC" id="1.11.1.21"/>
    </reaction>
</comment>
<comment type="cofactor">
    <cofactor evidence="1">
        <name>heme b</name>
        <dbReference type="ChEBI" id="CHEBI:60344"/>
    </cofactor>
    <text evidence="1">Binds 1 heme b (iron(II)-protoporphyrin IX) group per dimer.</text>
</comment>
<comment type="subunit">
    <text evidence="1">Homodimer or homotetramer.</text>
</comment>
<comment type="PTM">
    <text evidence="1">Formation of the three residue Trp-Tyr-Met cross-link is important for the catalase, but not the peroxidase activity of the enzyme.</text>
</comment>
<comment type="similarity">
    <text evidence="1">Belongs to the peroxidase family. Peroxidase/catalase subfamily.</text>
</comment>
<dbReference type="EC" id="1.11.1.21" evidence="1"/>
<dbReference type="EMBL" id="CP000961">
    <property type="protein sequence ID" value="ACA88163.1"/>
    <property type="molecule type" value="Genomic_DNA"/>
</dbReference>
<dbReference type="RefSeq" id="WP_012326493.1">
    <property type="nucleotide sequence ID" value="NC_010506.1"/>
</dbReference>
<dbReference type="SMR" id="B1KFI8"/>
<dbReference type="STRING" id="392500.Swoo_3905"/>
<dbReference type="KEGG" id="swd:Swoo_3905"/>
<dbReference type="eggNOG" id="COG0376">
    <property type="taxonomic scope" value="Bacteria"/>
</dbReference>
<dbReference type="HOGENOM" id="CLU_025424_2_0_6"/>
<dbReference type="Proteomes" id="UP000002168">
    <property type="component" value="Chromosome"/>
</dbReference>
<dbReference type="GO" id="GO:0005829">
    <property type="term" value="C:cytosol"/>
    <property type="evidence" value="ECO:0007669"/>
    <property type="project" value="TreeGrafter"/>
</dbReference>
<dbReference type="GO" id="GO:0004096">
    <property type="term" value="F:catalase activity"/>
    <property type="evidence" value="ECO:0007669"/>
    <property type="project" value="UniProtKB-UniRule"/>
</dbReference>
<dbReference type="GO" id="GO:0020037">
    <property type="term" value="F:heme binding"/>
    <property type="evidence" value="ECO:0007669"/>
    <property type="project" value="InterPro"/>
</dbReference>
<dbReference type="GO" id="GO:0046872">
    <property type="term" value="F:metal ion binding"/>
    <property type="evidence" value="ECO:0007669"/>
    <property type="project" value="UniProtKB-KW"/>
</dbReference>
<dbReference type="GO" id="GO:0070301">
    <property type="term" value="P:cellular response to hydrogen peroxide"/>
    <property type="evidence" value="ECO:0007669"/>
    <property type="project" value="TreeGrafter"/>
</dbReference>
<dbReference type="GO" id="GO:0042744">
    <property type="term" value="P:hydrogen peroxide catabolic process"/>
    <property type="evidence" value="ECO:0007669"/>
    <property type="project" value="UniProtKB-KW"/>
</dbReference>
<dbReference type="CDD" id="cd08200">
    <property type="entry name" value="catalase_peroxidase_2"/>
    <property type="match status" value="1"/>
</dbReference>
<dbReference type="FunFam" id="1.10.420.10:FF:000004">
    <property type="entry name" value="Catalase-peroxidase"/>
    <property type="match status" value="1"/>
</dbReference>
<dbReference type="FunFam" id="1.10.520.10:FF:000002">
    <property type="entry name" value="Catalase-peroxidase"/>
    <property type="match status" value="1"/>
</dbReference>
<dbReference type="Gene3D" id="1.10.520.10">
    <property type="match status" value="2"/>
</dbReference>
<dbReference type="Gene3D" id="1.10.420.10">
    <property type="entry name" value="Peroxidase, domain 2"/>
    <property type="match status" value="2"/>
</dbReference>
<dbReference type="HAMAP" id="MF_01961">
    <property type="entry name" value="Catal_peroxid"/>
    <property type="match status" value="1"/>
</dbReference>
<dbReference type="InterPro" id="IPR000763">
    <property type="entry name" value="Catalase_peroxidase"/>
</dbReference>
<dbReference type="InterPro" id="IPR002016">
    <property type="entry name" value="Haem_peroxidase"/>
</dbReference>
<dbReference type="InterPro" id="IPR010255">
    <property type="entry name" value="Haem_peroxidase_sf"/>
</dbReference>
<dbReference type="InterPro" id="IPR019794">
    <property type="entry name" value="Peroxidases_AS"/>
</dbReference>
<dbReference type="NCBIfam" id="TIGR00198">
    <property type="entry name" value="cat_per_HPI"/>
    <property type="match status" value="1"/>
</dbReference>
<dbReference type="NCBIfam" id="NF011635">
    <property type="entry name" value="PRK15061.1"/>
    <property type="match status" value="1"/>
</dbReference>
<dbReference type="PANTHER" id="PTHR30555:SF0">
    <property type="entry name" value="CATALASE-PEROXIDASE"/>
    <property type="match status" value="1"/>
</dbReference>
<dbReference type="PANTHER" id="PTHR30555">
    <property type="entry name" value="HYDROPEROXIDASE I, BIFUNCTIONAL CATALASE-PEROXIDASE"/>
    <property type="match status" value="1"/>
</dbReference>
<dbReference type="Pfam" id="PF00141">
    <property type="entry name" value="peroxidase"/>
    <property type="match status" value="2"/>
</dbReference>
<dbReference type="PRINTS" id="PR00460">
    <property type="entry name" value="BPEROXIDASE"/>
</dbReference>
<dbReference type="PRINTS" id="PR00458">
    <property type="entry name" value="PEROXIDASE"/>
</dbReference>
<dbReference type="SUPFAM" id="SSF48113">
    <property type="entry name" value="Heme-dependent peroxidases"/>
    <property type="match status" value="2"/>
</dbReference>
<dbReference type="PROSITE" id="PS00436">
    <property type="entry name" value="PEROXIDASE_2"/>
    <property type="match status" value="1"/>
</dbReference>
<dbReference type="PROSITE" id="PS50873">
    <property type="entry name" value="PEROXIDASE_4"/>
    <property type="match status" value="1"/>
</dbReference>